<protein>
    <recommendedName>
        <fullName evidence="1">Xylose isomerase</fullName>
        <ecNumber evidence="1">5.3.1.5</ecNumber>
    </recommendedName>
</protein>
<gene>
    <name evidence="1" type="primary">xylA</name>
    <name type="ordered locus">SG3771</name>
</gene>
<accession>B5RGL6</accession>
<feature type="chain" id="PRO_1000200306" description="Xylose isomerase">
    <location>
        <begin position="1"/>
        <end position="440"/>
    </location>
</feature>
<feature type="active site" evidence="1">
    <location>
        <position position="101"/>
    </location>
</feature>
<feature type="active site" evidence="1">
    <location>
        <position position="104"/>
    </location>
</feature>
<feature type="binding site" evidence="1">
    <location>
        <position position="232"/>
    </location>
    <ligand>
        <name>Mg(2+)</name>
        <dbReference type="ChEBI" id="CHEBI:18420"/>
        <label>1</label>
    </ligand>
</feature>
<feature type="binding site" evidence="1">
    <location>
        <position position="268"/>
    </location>
    <ligand>
        <name>Mg(2+)</name>
        <dbReference type="ChEBI" id="CHEBI:18420"/>
        <label>1</label>
    </ligand>
</feature>
<feature type="binding site" evidence="1">
    <location>
        <position position="268"/>
    </location>
    <ligand>
        <name>Mg(2+)</name>
        <dbReference type="ChEBI" id="CHEBI:18420"/>
        <label>2</label>
    </ligand>
</feature>
<feature type="binding site" evidence="1">
    <location>
        <position position="271"/>
    </location>
    <ligand>
        <name>Mg(2+)</name>
        <dbReference type="ChEBI" id="CHEBI:18420"/>
        <label>2</label>
    </ligand>
</feature>
<feature type="binding site" evidence="1">
    <location>
        <position position="296"/>
    </location>
    <ligand>
        <name>Mg(2+)</name>
        <dbReference type="ChEBI" id="CHEBI:18420"/>
        <label>1</label>
    </ligand>
</feature>
<feature type="binding site" evidence="1">
    <location>
        <position position="307"/>
    </location>
    <ligand>
        <name>Mg(2+)</name>
        <dbReference type="ChEBI" id="CHEBI:18420"/>
        <label>2</label>
    </ligand>
</feature>
<feature type="binding site" evidence="1">
    <location>
        <position position="309"/>
    </location>
    <ligand>
        <name>Mg(2+)</name>
        <dbReference type="ChEBI" id="CHEBI:18420"/>
        <label>2</label>
    </ligand>
</feature>
<feature type="binding site" evidence="1">
    <location>
        <position position="339"/>
    </location>
    <ligand>
        <name>Mg(2+)</name>
        <dbReference type="ChEBI" id="CHEBI:18420"/>
        <label>1</label>
    </ligand>
</feature>
<evidence type="ECO:0000255" key="1">
    <source>
        <dbReference type="HAMAP-Rule" id="MF_00455"/>
    </source>
</evidence>
<organism>
    <name type="scientific">Salmonella gallinarum (strain 287/91 / NCTC 13346)</name>
    <dbReference type="NCBI Taxonomy" id="550538"/>
    <lineage>
        <taxon>Bacteria</taxon>
        <taxon>Pseudomonadati</taxon>
        <taxon>Pseudomonadota</taxon>
        <taxon>Gammaproteobacteria</taxon>
        <taxon>Enterobacterales</taxon>
        <taxon>Enterobacteriaceae</taxon>
        <taxon>Salmonella</taxon>
    </lineage>
</organism>
<reference key="1">
    <citation type="journal article" date="2008" name="Genome Res.">
        <title>Comparative genome analysis of Salmonella enteritidis PT4 and Salmonella gallinarum 287/91 provides insights into evolutionary and host adaptation pathways.</title>
        <authorList>
            <person name="Thomson N.R."/>
            <person name="Clayton D.J."/>
            <person name="Windhorst D."/>
            <person name="Vernikos G."/>
            <person name="Davidson S."/>
            <person name="Churcher C."/>
            <person name="Quail M.A."/>
            <person name="Stevens M."/>
            <person name="Jones M.A."/>
            <person name="Watson M."/>
            <person name="Barron A."/>
            <person name="Layton A."/>
            <person name="Pickard D."/>
            <person name="Kingsley R.A."/>
            <person name="Bignell A."/>
            <person name="Clark L."/>
            <person name="Harris B."/>
            <person name="Ormond D."/>
            <person name="Abdellah Z."/>
            <person name="Brooks K."/>
            <person name="Cherevach I."/>
            <person name="Chillingworth T."/>
            <person name="Woodward J."/>
            <person name="Norberczak H."/>
            <person name="Lord A."/>
            <person name="Arrowsmith C."/>
            <person name="Jagels K."/>
            <person name="Moule S."/>
            <person name="Mungall K."/>
            <person name="Saunders M."/>
            <person name="Whitehead S."/>
            <person name="Chabalgoity J.A."/>
            <person name="Maskell D."/>
            <person name="Humphreys T."/>
            <person name="Roberts M."/>
            <person name="Barrow P.A."/>
            <person name="Dougan G."/>
            <person name="Parkhill J."/>
        </authorList>
    </citation>
    <scope>NUCLEOTIDE SEQUENCE [LARGE SCALE GENOMIC DNA]</scope>
    <source>
        <strain>287/91 / NCTC 13346</strain>
    </source>
</reference>
<name>XYLA_SALG2</name>
<keyword id="KW-0119">Carbohydrate metabolism</keyword>
<keyword id="KW-0963">Cytoplasm</keyword>
<keyword id="KW-0413">Isomerase</keyword>
<keyword id="KW-0460">Magnesium</keyword>
<keyword id="KW-0479">Metal-binding</keyword>
<keyword id="KW-0859">Xylose metabolism</keyword>
<comment type="catalytic activity">
    <reaction evidence="1">
        <text>alpha-D-xylose = alpha-D-xylulofuranose</text>
        <dbReference type="Rhea" id="RHEA:22816"/>
        <dbReference type="ChEBI" id="CHEBI:28518"/>
        <dbReference type="ChEBI" id="CHEBI:188998"/>
        <dbReference type="EC" id="5.3.1.5"/>
    </reaction>
</comment>
<comment type="cofactor">
    <cofactor evidence="1">
        <name>Mg(2+)</name>
        <dbReference type="ChEBI" id="CHEBI:18420"/>
    </cofactor>
    <text evidence="1">Binds 2 magnesium ions per subunit.</text>
</comment>
<comment type="subunit">
    <text evidence="1">Homotetramer.</text>
</comment>
<comment type="subcellular location">
    <subcellularLocation>
        <location evidence="1">Cytoplasm</location>
    </subcellularLocation>
</comment>
<comment type="similarity">
    <text evidence="1">Belongs to the xylose isomerase family.</text>
</comment>
<proteinExistence type="inferred from homology"/>
<dbReference type="EC" id="5.3.1.5" evidence="1"/>
<dbReference type="EMBL" id="AM933173">
    <property type="protein sequence ID" value="CAR39550.1"/>
    <property type="molecule type" value="Genomic_DNA"/>
</dbReference>
<dbReference type="RefSeq" id="WP_001149563.1">
    <property type="nucleotide sequence ID" value="NC_011274.1"/>
</dbReference>
<dbReference type="SMR" id="B5RGL6"/>
<dbReference type="KEGG" id="seg:SG3771"/>
<dbReference type="HOGENOM" id="CLU_037261_1_0_6"/>
<dbReference type="Proteomes" id="UP000008321">
    <property type="component" value="Chromosome"/>
</dbReference>
<dbReference type="GO" id="GO:0005737">
    <property type="term" value="C:cytoplasm"/>
    <property type="evidence" value="ECO:0007669"/>
    <property type="project" value="UniProtKB-SubCell"/>
</dbReference>
<dbReference type="GO" id="GO:0000287">
    <property type="term" value="F:magnesium ion binding"/>
    <property type="evidence" value="ECO:0007669"/>
    <property type="project" value="UniProtKB-UniRule"/>
</dbReference>
<dbReference type="GO" id="GO:0009045">
    <property type="term" value="F:xylose isomerase activity"/>
    <property type="evidence" value="ECO:0007669"/>
    <property type="project" value="UniProtKB-UniRule"/>
</dbReference>
<dbReference type="GO" id="GO:0042732">
    <property type="term" value="P:D-xylose metabolic process"/>
    <property type="evidence" value="ECO:0007669"/>
    <property type="project" value="UniProtKB-UniRule"/>
</dbReference>
<dbReference type="FunFam" id="3.20.20.150:FF:000002">
    <property type="entry name" value="Xylose isomerase"/>
    <property type="match status" value="1"/>
</dbReference>
<dbReference type="Gene3D" id="3.20.20.150">
    <property type="entry name" value="Divalent-metal-dependent TIM barrel enzymes"/>
    <property type="match status" value="1"/>
</dbReference>
<dbReference type="HAMAP" id="MF_00455">
    <property type="entry name" value="Xylose_isom_A"/>
    <property type="match status" value="1"/>
</dbReference>
<dbReference type="InterPro" id="IPR036237">
    <property type="entry name" value="Xyl_isomerase-like_sf"/>
</dbReference>
<dbReference type="InterPro" id="IPR013452">
    <property type="entry name" value="Xylose_isom_bac"/>
</dbReference>
<dbReference type="InterPro" id="IPR001998">
    <property type="entry name" value="Xylose_isomerase"/>
</dbReference>
<dbReference type="NCBIfam" id="NF003998">
    <property type="entry name" value="PRK05474.1"/>
    <property type="match status" value="1"/>
</dbReference>
<dbReference type="NCBIfam" id="TIGR02630">
    <property type="entry name" value="xylose_isom_A"/>
    <property type="match status" value="1"/>
</dbReference>
<dbReference type="PANTHER" id="PTHR48408">
    <property type="match status" value="1"/>
</dbReference>
<dbReference type="PANTHER" id="PTHR48408:SF1">
    <property type="entry name" value="XYLOSE ISOMERASE"/>
    <property type="match status" value="1"/>
</dbReference>
<dbReference type="PRINTS" id="PR00688">
    <property type="entry name" value="XYLOSISMRASE"/>
</dbReference>
<dbReference type="SUPFAM" id="SSF51658">
    <property type="entry name" value="Xylose isomerase-like"/>
    <property type="match status" value="1"/>
</dbReference>
<dbReference type="PROSITE" id="PS51415">
    <property type="entry name" value="XYLOSE_ISOMERASE"/>
    <property type="match status" value="1"/>
</dbReference>
<sequence>MQAYFDQLDRVRYEGPQSTNPLAFRHYNPDELVLGKRMEDHLRFAACYWHTFCWNGADMFGVGAFNRPWQQPGEALELAKRKADVAFEFFHKLNVPFYCFHDVDVSPEGASLKEYKNNFAQMVDVLAAKQEQSGVKLLWGTANCFTNPRYGAGAATNPDPEVFSWAATQVVTAMNATHKLGGENYVLWGGREGYETLLNTDLRQEREQIGRFMQMVVEHKHKMGFQGTLLIEPKPQEPTKHQYDYDVATVYGFLKQFGLEKEIKVNIEANHATLAGHSFHHEIATAIALGIFGSVDANRGDAQLGWDTDQFPISVEENALVMYEILKAGGFTTGGLNFDAKVRRQSTDKYDLFYGHIGAMDTMALSLKIAARMVEDGELDKRVAKRYAGWNSELGQQILKGQLSLGELAQYAEQHNLAPVHQSGHQELLENLVNRYLFDK</sequence>